<gene>
    <name evidence="1" type="primary">tdk</name>
    <name type="ordered locus">lp_2379</name>
</gene>
<dbReference type="EC" id="2.7.1.21" evidence="1"/>
<dbReference type="EMBL" id="AL935263">
    <property type="protein sequence ID" value="CCC79565.1"/>
    <property type="molecule type" value="Genomic_DNA"/>
</dbReference>
<dbReference type="RefSeq" id="WP_003644660.1">
    <property type="nucleotide sequence ID" value="NC_004567.2"/>
</dbReference>
<dbReference type="RefSeq" id="YP_004890079.1">
    <property type="nucleotide sequence ID" value="NC_004567.2"/>
</dbReference>
<dbReference type="SMR" id="Q88UT1"/>
<dbReference type="STRING" id="220668.lp_2379"/>
<dbReference type="EnsemblBacteria" id="CCC79565">
    <property type="protein sequence ID" value="CCC79565"/>
    <property type="gene ID" value="lp_2379"/>
</dbReference>
<dbReference type="KEGG" id="lpl:lp_2379"/>
<dbReference type="PATRIC" id="fig|220668.9.peg.2011"/>
<dbReference type="eggNOG" id="COG1435">
    <property type="taxonomic scope" value="Bacteria"/>
</dbReference>
<dbReference type="HOGENOM" id="CLU_064400_2_2_9"/>
<dbReference type="OrthoDB" id="9781579at2"/>
<dbReference type="PhylomeDB" id="Q88UT1"/>
<dbReference type="Proteomes" id="UP000000432">
    <property type="component" value="Chromosome"/>
</dbReference>
<dbReference type="GO" id="GO:0005829">
    <property type="term" value="C:cytosol"/>
    <property type="evidence" value="ECO:0007669"/>
    <property type="project" value="TreeGrafter"/>
</dbReference>
<dbReference type="GO" id="GO:0005524">
    <property type="term" value="F:ATP binding"/>
    <property type="evidence" value="ECO:0007669"/>
    <property type="project" value="UniProtKB-UniRule"/>
</dbReference>
<dbReference type="GO" id="GO:0004797">
    <property type="term" value="F:thymidine kinase activity"/>
    <property type="evidence" value="ECO:0007669"/>
    <property type="project" value="UniProtKB-UniRule"/>
</dbReference>
<dbReference type="GO" id="GO:0008270">
    <property type="term" value="F:zinc ion binding"/>
    <property type="evidence" value="ECO:0007669"/>
    <property type="project" value="UniProtKB-UniRule"/>
</dbReference>
<dbReference type="GO" id="GO:0071897">
    <property type="term" value="P:DNA biosynthetic process"/>
    <property type="evidence" value="ECO:0007669"/>
    <property type="project" value="UniProtKB-KW"/>
</dbReference>
<dbReference type="GO" id="GO:0046104">
    <property type="term" value="P:thymidine metabolic process"/>
    <property type="evidence" value="ECO:0007669"/>
    <property type="project" value="TreeGrafter"/>
</dbReference>
<dbReference type="Gene3D" id="3.30.60.20">
    <property type="match status" value="1"/>
</dbReference>
<dbReference type="Gene3D" id="3.40.50.300">
    <property type="entry name" value="P-loop containing nucleotide triphosphate hydrolases"/>
    <property type="match status" value="1"/>
</dbReference>
<dbReference type="HAMAP" id="MF_00124">
    <property type="entry name" value="Thymidine_kinase"/>
    <property type="match status" value="1"/>
</dbReference>
<dbReference type="InterPro" id="IPR027417">
    <property type="entry name" value="P-loop_NTPase"/>
</dbReference>
<dbReference type="InterPro" id="IPR001267">
    <property type="entry name" value="Thymidine_kinase"/>
</dbReference>
<dbReference type="InterPro" id="IPR020633">
    <property type="entry name" value="Thymidine_kinase_CS"/>
</dbReference>
<dbReference type="NCBIfam" id="NF003299">
    <property type="entry name" value="PRK04296.1-4"/>
    <property type="match status" value="1"/>
</dbReference>
<dbReference type="NCBIfam" id="NF003300">
    <property type="entry name" value="PRK04296.1-5"/>
    <property type="match status" value="1"/>
</dbReference>
<dbReference type="PANTHER" id="PTHR11441">
    <property type="entry name" value="THYMIDINE KINASE"/>
    <property type="match status" value="1"/>
</dbReference>
<dbReference type="PANTHER" id="PTHR11441:SF0">
    <property type="entry name" value="THYMIDINE KINASE, CYTOSOLIC"/>
    <property type="match status" value="1"/>
</dbReference>
<dbReference type="Pfam" id="PF00265">
    <property type="entry name" value="TK"/>
    <property type="match status" value="1"/>
</dbReference>
<dbReference type="PIRSF" id="PIRSF035805">
    <property type="entry name" value="TK_cell"/>
    <property type="match status" value="1"/>
</dbReference>
<dbReference type="SUPFAM" id="SSF57716">
    <property type="entry name" value="Glucocorticoid receptor-like (DNA-binding domain)"/>
    <property type="match status" value="1"/>
</dbReference>
<dbReference type="SUPFAM" id="SSF52540">
    <property type="entry name" value="P-loop containing nucleoside triphosphate hydrolases"/>
    <property type="match status" value="1"/>
</dbReference>
<dbReference type="PROSITE" id="PS00603">
    <property type="entry name" value="TK_CELLULAR_TYPE"/>
    <property type="match status" value="1"/>
</dbReference>
<reference key="1">
    <citation type="journal article" date="2003" name="Proc. Natl. Acad. Sci. U.S.A.">
        <title>Complete genome sequence of Lactobacillus plantarum WCFS1.</title>
        <authorList>
            <person name="Kleerebezem M."/>
            <person name="Boekhorst J."/>
            <person name="van Kranenburg R."/>
            <person name="Molenaar D."/>
            <person name="Kuipers O.P."/>
            <person name="Leer R."/>
            <person name="Tarchini R."/>
            <person name="Peters S.A."/>
            <person name="Sandbrink H.M."/>
            <person name="Fiers M.W.E.J."/>
            <person name="Stiekema W."/>
            <person name="Klein Lankhorst R.M."/>
            <person name="Bron P.A."/>
            <person name="Hoffer S.M."/>
            <person name="Nierop Groot M.N."/>
            <person name="Kerkhoven R."/>
            <person name="De Vries M."/>
            <person name="Ursing B."/>
            <person name="De Vos W.M."/>
            <person name="Siezen R.J."/>
        </authorList>
    </citation>
    <scope>NUCLEOTIDE SEQUENCE [LARGE SCALE GENOMIC DNA]</scope>
    <source>
        <strain>ATCC BAA-793 / NCIMB 8826 / WCFS1</strain>
    </source>
</reference>
<reference key="2">
    <citation type="journal article" date="2012" name="J. Bacteriol.">
        <title>Complete resequencing and reannotation of the Lactobacillus plantarum WCFS1 genome.</title>
        <authorList>
            <person name="Siezen R.J."/>
            <person name="Francke C."/>
            <person name="Renckens B."/>
            <person name="Boekhorst J."/>
            <person name="Wels M."/>
            <person name="Kleerebezem M."/>
            <person name="van Hijum S.A."/>
        </authorList>
    </citation>
    <scope>NUCLEOTIDE SEQUENCE [LARGE SCALE GENOMIC DNA]</scope>
    <scope>GENOME REANNOTATION</scope>
    <source>
        <strain>ATCC BAA-793 / NCIMB 8826 / WCFS1</strain>
    </source>
</reference>
<name>KITH_LACPL</name>
<sequence>MAQLFFRYGAMNSGKTIEILKVAHNYEEQDKSVIILTSGLDNRDGVGYVASRIGLKREATPVFDDTNIFEIVKQTNPDAACVLIDEAQFLKKHHVLELADIVDELKIPVMTFGLKNDFRNELFEGSKYLLLYADKIEEMKTICWFCRKKAIMNLRFHDGQPVYEGEQVQIGGNEAYYPVCRHHYFYPPKLTK</sequence>
<protein>
    <recommendedName>
        <fullName evidence="1">Thymidine kinase</fullName>
        <ecNumber evidence="1">2.7.1.21</ecNumber>
    </recommendedName>
</protein>
<keyword id="KW-0067">ATP-binding</keyword>
<keyword id="KW-0963">Cytoplasm</keyword>
<keyword id="KW-0237">DNA synthesis</keyword>
<keyword id="KW-0418">Kinase</keyword>
<keyword id="KW-0479">Metal-binding</keyword>
<keyword id="KW-0547">Nucleotide-binding</keyword>
<keyword id="KW-1185">Reference proteome</keyword>
<keyword id="KW-0808">Transferase</keyword>
<keyword id="KW-0862">Zinc</keyword>
<proteinExistence type="inferred from homology"/>
<feature type="chain" id="PRO_0000174984" description="Thymidine kinase">
    <location>
        <begin position="1"/>
        <end position="192"/>
    </location>
</feature>
<feature type="active site" description="Proton acceptor" evidence="1">
    <location>
        <position position="86"/>
    </location>
</feature>
<feature type="binding site" evidence="1">
    <location>
        <begin position="9"/>
        <end position="16"/>
    </location>
    <ligand>
        <name>ATP</name>
        <dbReference type="ChEBI" id="CHEBI:30616"/>
    </ligand>
</feature>
<feature type="binding site" evidence="1">
    <location>
        <begin position="85"/>
        <end position="88"/>
    </location>
    <ligand>
        <name>ATP</name>
        <dbReference type="ChEBI" id="CHEBI:30616"/>
    </ligand>
</feature>
<feature type="binding site" evidence="1">
    <location>
        <position position="143"/>
    </location>
    <ligand>
        <name>Zn(2+)</name>
        <dbReference type="ChEBI" id="CHEBI:29105"/>
    </ligand>
</feature>
<feature type="binding site" evidence="1">
    <location>
        <position position="146"/>
    </location>
    <ligand>
        <name>Zn(2+)</name>
        <dbReference type="ChEBI" id="CHEBI:29105"/>
    </ligand>
</feature>
<feature type="binding site" evidence="1">
    <location>
        <position position="180"/>
    </location>
    <ligand>
        <name>Zn(2+)</name>
        <dbReference type="ChEBI" id="CHEBI:29105"/>
    </ligand>
</feature>
<feature type="binding site" evidence="1">
    <location>
        <position position="183"/>
    </location>
    <ligand>
        <name>Zn(2+)</name>
        <dbReference type="ChEBI" id="CHEBI:29105"/>
    </ligand>
</feature>
<accession>Q88UT1</accession>
<accession>F9UQS6</accession>
<organism>
    <name type="scientific">Lactiplantibacillus plantarum (strain ATCC BAA-793 / NCIMB 8826 / WCFS1)</name>
    <name type="common">Lactobacillus plantarum</name>
    <dbReference type="NCBI Taxonomy" id="220668"/>
    <lineage>
        <taxon>Bacteria</taxon>
        <taxon>Bacillati</taxon>
        <taxon>Bacillota</taxon>
        <taxon>Bacilli</taxon>
        <taxon>Lactobacillales</taxon>
        <taxon>Lactobacillaceae</taxon>
        <taxon>Lactiplantibacillus</taxon>
    </lineage>
</organism>
<evidence type="ECO:0000255" key="1">
    <source>
        <dbReference type="HAMAP-Rule" id="MF_00124"/>
    </source>
</evidence>
<comment type="catalytic activity">
    <reaction evidence="1">
        <text>thymidine + ATP = dTMP + ADP + H(+)</text>
        <dbReference type="Rhea" id="RHEA:19129"/>
        <dbReference type="ChEBI" id="CHEBI:15378"/>
        <dbReference type="ChEBI" id="CHEBI:17748"/>
        <dbReference type="ChEBI" id="CHEBI:30616"/>
        <dbReference type="ChEBI" id="CHEBI:63528"/>
        <dbReference type="ChEBI" id="CHEBI:456216"/>
        <dbReference type="EC" id="2.7.1.21"/>
    </reaction>
</comment>
<comment type="subunit">
    <text evidence="1">Homotetramer.</text>
</comment>
<comment type="subcellular location">
    <subcellularLocation>
        <location evidence="1">Cytoplasm</location>
    </subcellularLocation>
</comment>
<comment type="similarity">
    <text evidence="1">Belongs to the thymidine kinase family.</text>
</comment>